<evidence type="ECO:0000303" key="1">
    <source>
    </source>
</evidence>
<evidence type="ECO:0000303" key="2">
    <source>
    </source>
</evidence>
<evidence type="ECO:0000303" key="3">
    <source>
    </source>
</evidence>
<evidence type="ECO:0000303" key="4">
    <source>
    </source>
</evidence>
<evidence type="ECO:0000303" key="5">
    <source>
    </source>
</evidence>
<evidence type="ECO:0000303" key="6">
    <source ref="3"/>
</evidence>
<evidence type="ECO:0000305" key="7"/>
<feature type="chain" id="PRO_0000439097" description="Immunoglobulin heavy diversity 1-1">
    <location>
        <begin position="1" status="less than"/>
        <end position="5" status="greater than"/>
    </location>
</feature>
<feature type="non-terminal residue">
    <location>
        <position position="1"/>
    </location>
</feature>
<feature type="non-terminal residue">
    <location>
        <position position="5"/>
    </location>
</feature>
<organism>
    <name type="scientific">Homo sapiens</name>
    <name type="common">Human</name>
    <dbReference type="NCBI Taxonomy" id="9606"/>
    <lineage>
        <taxon>Eukaryota</taxon>
        <taxon>Metazoa</taxon>
        <taxon>Chordata</taxon>
        <taxon>Craniata</taxon>
        <taxon>Vertebrata</taxon>
        <taxon>Euteleostomi</taxon>
        <taxon>Mammalia</taxon>
        <taxon>Eutheria</taxon>
        <taxon>Euarchontoglires</taxon>
        <taxon>Primates</taxon>
        <taxon>Haplorrhini</taxon>
        <taxon>Catarrhini</taxon>
        <taxon>Hominidae</taxon>
        <taxon>Homo</taxon>
    </lineage>
</organism>
<proteinExistence type="predicted"/>
<gene>
    <name evidence="1 6" type="primary">IGHD1-1</name>
</gene>
<accession>P0DOY5</accession>
<sequence>GTTGT</sequence>
<dbReference type="EMBL" id="AC246787">
    <property type="status" value="NOT_ANNOTATED_CDS"/>
    <property type="molecule type" value="Genomic_DNA"/>
</dbReference>
<dbReference type="IMGT_GENE-DB" id="IGHD1-1"/>
<dbReference type="BioMuta" id="IGHD1-1"/>
<dbReference type="Ensembl" id="ENST00000454908.1">
    <property type="protein sequence ID" value="ENSP00000418625.1"/>
    <property type="gene ID" value="ENSG00000236170.1"/>
</dbReference>
<dbReference type="Ensembl" id="ENST00000633210.1">
    <property type="protein sequence ID" value="ENSP00000488840.1"/>
    <property type="gene ID" value="ENSG00000282714.1"/>
</dbReference>
<dbReference type="AGR" id="HGNC:5482"/>
<dbReference type="GeneCards" id="IGHD1-1"/>
<dbReference type="HGNC" id="HGNC:5482">
    <property type="gene designation" value="IGHD1-1"/>
</dbReference>
<dbReference type="HPA" id="ENSG00000236170">
    <property type="expression patterns" value="Not detected"/>
</dbReference>
<dbReference type="neXtProt" id="NX_P0DOY5"/>
<dbReference type="VEuPathDB" id="HostDB:ENSG00000236170"/>
<dbReference type="InParanoid" id="P0DOY5"/>
<dbReference type="PAN-GO" id="P0DOY5">
    <property type="GO annotations" value="0 GO annotations based on evolutionary models"/>
</dbReference>
<dbReference type="Pharos" id="P0DOY5">
    <property type="development level" value="Tdark"/>
</dbReference>
<dbReference type="PRO" id="PR:P0DOY5"/>
<dbReference type="Proteomes" id="UP000005640">
    <property type="component" value="Chromosome 14"/>
</dbReference>
<dbReference type="GO" id="GO:0005576">
    <property type="term" value="C:extracellular region"/>
    <property type="evidence" value="ECO:0007669"/>
    <property type="project" value="UniProtKB-SubCell"/>
</dbReference>
<dbReference type="GO" id="GO:0019814">
    <property type="term" value="C:immunoglobulin complex"/>
    <property type="evidence" value="ECO:0007669"/>
    <property type="project" value="UniProtKB-KW"/>
</dbReference>
<dbReference type="GO" id="GO:0005886">
    <property type="term" value="C:plasma membrane"/>
    <property type="evidence" value="ECO:0007669"/>
    <property type="project" value="UniProtKB-SubCell"/>
</dbReference>
<dbReference type="GO" id="GO:0002250">
    <property type="term" value="P:adaptive immune response"/>
    <property type="evidence" value="ECO:0007669"/>
    <property type="project" value="UniProtKB-KW"/>
</dbReference>
<keyword id="KW-1064">Adaptive immunity</keyword>
<keyword id="KW-1003">Cell membrane</keyword>
<keyword id="KW-0391">Immunity</keyword>
<keyword id="KW-1280">Immunoglobulin</keyword>
<keyword id="KW-0393">Immunoglobulin domain</keyword>
<keyword id="KW-0472">Membrane</keyword>
<keyword id="KW-1185">Reference proteome</keyword>
<keyword id="KW-0964">Secreted</keyword>
<protein>
    <recommendedName>
        <fullName evidence="1 6">Immunoglobulin heavy diversity 1-1</fullName>
    </recommendedName>
</protein>
<name>HD101_HUMAN</name>
<reference key="1">
    <citation type="journal article" date="2003" name="Nature">
        <title>The DNA sequence and analysis of human chromosome 14.</title>
        <authorList>
            <person name="Heilig R."/>
            <person name="Eckenberg R."/>
            <person name="Petit J.-L."/>
            <person name="Fonknechten N."/>
            <person name="Da Silva C."/>
            <person name="Cattolico L."/>
            <person name="Levy M."/>
            <person name="Barbe V."/>
            <person name="De Berardinis V."/>
            <person name="Ureta-Vidal A."/>
            <person name="Pelletier E."/>
            <person name="Vico V."/>
            <person name="Anthouard V."/>
            <person name="Rowen L."/>
            <person name="Madan A."/>
            <person name="Qin S."/>
            <person name="Sun H."/>
            <person name="Du H."/>
            <person name="Pepin K."/>
            <person name="Artiguenave F."/>
            <person name="Robert C."/>
            <person name="Cruaud C."/>
            <person name="Bruels T."/>
            <person name="Jaillon O."/>
            <person name="Friedlander L."/>
            <person name="Samson G."/>
            <person name="Brottier P."/>
            <person name="Cure S."/>
            <person name="Segurens B."/>
            <person name="Aniere F."/>
            <person name="Samain S."/>
            <person name="Crespeau H."/>
            <person name="Abbasi N."/>
            <person name="Aiach N."/>
            <person name="Boscus D."/>
            <person name="Dickhoff R."/>
            <person name="Dors M."/>
            <person name="Dubois I."/>
            <person name="Friedman C."/>
            <person name="Gouyvenoux M."/>
            <person name="James R."/>
            <person name="Madan A."/>
            <person name="Mairey-Estrada B."/>
            <person name="Mangenot S."/>
            <person name="Martins N."/>
            <person name="Menard M."/>
            <person name="Oztas S."/>
            <person name="Ratcliffe A."/>
            <person name="Shaffer T."/>
            <person name="Trask B."/>
            <person name="Vacherie B."/>
            <person name="Bellemere C."/>
            <person name="Belser C."/>
            <person name="Besnard-Gonnet M."/>
            <person name="Bartol-Mavel D."/>
            <person name="Boutard M."/>
            <person name="Briez-Silla S."/>
            <person name="Combette S."/>
            <person name="Dufosse-Laurent V."/>
            <person name="Ferron C."/>
            <person name="Lechaplais C."/>
            <person name="Louesse C."/>
            <person name="Muselet D."/>
            <person name="Magdelenat G."/>
            <person name="Pateau E."/>
            <person name="Petit E."/>
            <person name="Sirvain-Trukniewicz P."/>
            <person name="Trybou A."/>
            <person name="Vega-Czarny N."/>
            <person name="Bataille E."/>
            <person name="Bluet E."/>
            <person name="Bordelais I."/>
            <person name="Dubois M."/>
            <person name="Dumont C."/>
            <person name="Guerin T."/>
            <person name="Haffray S."/>
            <person name="Hammadi R."/>
            <person name="Muanga J."/>
            <person name="Pellouin V."/>
            <person name="Robert D."/>
            <person name="Wunderle E."/>
            <person name="Gauguet G."/>
            <person name="Roy A."/>
            <person name="Sainte-Marthe L."/>
            <person name="Verdier J."/>
            <person name="Verdier-Discala C."/>
            <person name="Hillier L.W."/>
            <person name="Fulton L."/>
            <person name="McPherson J."/>
            <person name="Matsuda F."/>
            <person name="Wilson R."/>
            <person name="Scarpelli C."/>
            <person name="Gyapay G."/>
            <person name="Wincker P."/>
            <person name="Saurin W."/>
            <person name="Quetier F."/>
            <person name="Waterston R."/>
            <person name="Hood L."/>
            <person name="Weissenbach J."/>
        </authorList>
    </citation>
    <scope>NUCLEOTIDE SEQUENCE [LARGE SCALE GENOMIC DNA] (IMGT ALLELE IGHD1-1*01)</scope>
</reference>
<reference key="2">
    <citation type="journal article" date="2001" name="Exp. Clin. Immunogenet.">
        <title>Nomenclature of the human immunoglobulin heavy (IGH) genes.</title>
        <authorList>
            <person name="Lefranc M.P."/>
        </authorList>
    </citation>
    <scope>NOMENCLATURE</scope>
</reference>
<reference key="3">
    <citation type="book" date="2001" name="The Immunoglobulin FactsBook.">
        <title>The Immunoglobulin FactsBook.</title>
        <editorList>
            <person name="Lefranc M.P."/>
            <person name="Lefranc G."/>
        </editorList>
        <authorList>
            <person name="Lefranc M.P."/>
            <person name="Lefranc G."/>
        </authorList>
    </citation>
    <scope>NOMENCLATURE</scope>
</reference>
<reference key="4">
    <citation type="journal article" date="2007" name="Annu. Rev. Genet.">
        <title>Immunoglobulin somatic hypermutation.</title>
        <authorList>
            <person name="Teng G."/>
            <person name="Papavasiliou F.N."/>
        </authorList>
    </citation>
    <scope>REVIEW ON SOMATIC HYPERMUTATION</scope>
</reference>
<reference key="5">
    <citation type="journal article" date="2010" name="J. Allergy Clin. Immunol.">
        <title>Structure and function of immunoglobulins.</title>
        <authorList>
            <person name="Schroeder H.W. Jr."/>
            <person name="Cavacini L."/>
        </authorList>
    </citation>
    <scope>REVIEW ON IMMUNOGLOBULINS</scope>
</reference>
<reference key="6">
    <citation type="journal article" date="2012" name="Nat. Rev. Immunol.">
        <title>Molecular programming of B cell memory.</title>
        <authorList>
            <person name="McHeyzer-Williams M."/>
            <person name="Okitsu S."/>
            <person name="Wang N."/>
            <person name="McHeyzer-Williams L."/>
        </authorList>
    </citation>
    <scope>REVIEW ON FUNCTION</scope>
</reference>
<reference key="7">
    <citation type="journal article" date="2014" name="Front. Immunol.">
        <title>Immunoglobulin and T Cell Receptor Genes: IMGT((R)) and the Birth and Rise of Immunoinformatics.</title>
        <authorList>
            <person name="Lefranc M.P."/>
        </authorList>
    </citation>
    <scope>NOMENCLATURE</scope>
</reference>
<comment type="function">
    <text evidence="2 3 4 5">D region of the variable domain of immunoglobulin heavy chains that participates in the antigen recognition (PubMed:24600447). Immunoglobulins, also known as antibodies, are membrane-bound or secreted glycoproteins produced by B lymphocytes. In the recognition phase of humoral immunity, the membrane-bound immunoglobulins serve as receptors which, upon binding of a specific antigen, trigger the clonal expansion and differentiation of B lymphocytes into immunoglobulins-secreting plasma cells. Secreted immunoglobulins mediate the effector phase of humoral immunity, which results in the elimination of bound antigens (PubMed:20176268, PubMed:22158414). The antigen binding site is formed by the variable domain of one heavy chain, together with that of its associated light chain. Thus, each immunoglobulin has two antigen binding sites with remarkable affinity for a particular antigen. The variable domains are assembled by a process called V-(D)-J rearrangement and can then be subjected to somatic hypermutations which, after exposure to antigen and selection, allow affinity maturation for a particular antigen (PubMed:17576170, PubMed:20176268).</text>
</comment>
<comment type="subunit">
    <text evidence="3">Immunoglobulins are composed of two identical heavy chains and two identical light chains; disulfide-linked.</text>
</comment>
<comment type="subcellular location">
    <subcellularLocation>
        <location evidence="3 4">Secreted</location>
    </subcellularLocation>
    <subcellularLocation>
        <location evidence="3 4">Cell membrane</location>
    </subcellularLocation>
</comment>
<comment type="polymorphism">
    <text evidence="7">The sequence shown is that of IMGT allele IGHD1-1*01.</text>
</comment>
<comment type="caution">
    <text evidence="7">There are several genes encoding the D region in the immunoglobulin heavy locus. The peptide described in this entry is a representative for all the peptides encoded by these genes. For examples of full-length immunoglobulin heavy chains (of different isotypes) see AC P0DOX2, AC P0DOX3, AC P0DOX4, AC P0DOX5 and AC P0DOX6.</text>
</comment>